<name>LYRM2_RAT</name>
<dbReference type="EMBL" id="CH473962">
    <property type="protein sequence ID" value="EDL98568.1"/>
    <property type="molecule type" value="Genomic_DNA"/>
</dbReference>
<dbReference type="EMBL" id="BC166578">
    <property type="protein sequence ID" value="AAI66578.1"/>
    <property type="molecule type" value="mRNA"/>
</dbReference>
<dbReference type="RefSeq" id="NP_001119568.1">
    <property type="nucleotide sequence ID" value="NM_001126096.1"/>
</dbReference>
<dbReference type="SMR" id="B2GV91"/>
<dbReference type="FunCoup" id="B2GV91">
    <property type="interactions" value="1009"/>
</dbReference>
<dbReference type="STRING" id="10116.ENSRNOP00000061849"/>
<dbReference type="PhosphoSitePlus" id="B2GV91"/>
<dbReference type="PaxDb" id="10116-ENSRNOP00000061849"/>
<dbReference type="PeptideAtlas" id="B2GV91"/>
<dbReference type="Ensembl" id="ENSRNOT00000065926.4">
    <property type="protein sequence ID" value="ENSRNOP00000061849.1"/>
    <property type="gene ID" value="ENSRNOG00000043105.4"/>
</dbReference>
<dbReference type="GeneID" id="690354"/>
<dbReference type="KEGG" id="rno:690354"/>
<dbReference type="UCSC" id="RGD:1597334">
    <property type="organism name" value="rat"/>
</dbReference>
<dbReference type="AGR" id="RGD:1597334"/>
<dbReference type="CTD" id="57226"/>
<dbReference type="RGD" id="1597334">
    <property type="gene designation" value="Lyrm2"/>
</dbReference>
<dbReference type="eggNOG" id="ENOG502S8DG">
    <property type="taxonomic scope" value="Eukaryota"/>
</dbReference>
<dbReference type="GeneTree" id="ENSGT00390000002957"/>
<dbReference type="HOGENOM" id="CLU_151409_1_1_1"/>
<dbReference type="InParanoid" id="B2GV91"/>
<dbReference type="OMA" id="YMRDWAR"/>
<dbReference type="OrthoDB" id="74240at2759"/>
<dbReference type="PhylomeDB" id="B2GV91"/>
<dbReference type="TreeFam" id="TF323797"/>
<dbReference type="Reactome" id="R-RNO-6799198">
    <property type="pathway name" value="Complex I biogenesis"/>
</dbReference>
<dbReference type="PRO" id="PR:B2GV91"/>
<dbReference type="Proteomes" id="UP000002494">
    <property type="component" value="Chromosome 5"/>
</dbReference>
<dbReference type="Proteomes" id="UP000234681">
    <property type="component" value="Chromosome 5"/>
</dbReference>
<dbReference type="Bgee" id="ENSRNOG00000043105">
    <property type="expression patterns" value="Expressed in heart and 20 other cell types or tissues"/>
</dbReference>
<dbReference type="GO" id="GO:0005739">
    <property type="term" value="C:mitochondrion"/>
    <property type="evidence" value="ECO:0000318"/>
    <property type="project" value="GO_Central"/>
</dbReference>
<dbReference type="GO" id="GO:0032981">
    <property type="term" value="P:mitochondrial respiratory chain complex I assembly"/>
    <property type="evidence" value="ECO:0000250"/>
    <property type="project" value="UniProtKB"/>
</dbReference>
<dbReference type="CDD" id="cd20262">
    <property type="entry name" value="Complex1_LYR_LYRM2"/>
    <property type="match status" value="1"/>
</dbReference>
<dbReference type="InterPro" id="IPR008011">
    <property type="entry name" value="Complex1_LYR_dom"/>
</dbReference>
<dbReference type="InterPro" id="IPR045293">
    <property type="entry name" value="Complex1_LYR_LYRM2"/>
</dbReference>
<dbReference type="PANTHER" id="PTHR13675">
    <property type="entry name" value="LYR MOTIF-CONTAINING PROTEIN 2"/>
    <property type="match status" value="1"/>
</dbReference>
<dbReference type="PANTHER" id="PTHR13675:SF3">
    <property type="entry name" value="LYR MOTIF-CONTAINING PROTEIN 2"/>
    <property type="match status" value="1"/>
</dbReference>
<dbReference type="Pfam" id="PF05347">
    <property type="entry name" value="Complex1_LYR"/>
    <property type="match status" value="1"/>
</dbReference>
<evidence type="ECO:0000250" key="1">
    <source>
        <dbReference type="UniProtKB" id="Q9NU23"/>
    </source>
</evidence>
<evidence type="ECO:0000255" key="2"/>
<evidence type="ECO:0000305" key="3"/>
<organism>
    <name type="scientific">Rattus norvegicus</name>
    <name type="common">Rat</name>
    <dbReference type="NCBI Taxonomy" id="10116"/>
    <lineage>
        <taxon>Eukaryota</taxon>
        <taxon>Metazoa</taxon>
        <taxon>Chordata</taxon>
        <taxon>Craniata</taxon>
        <taxon>Vertebrata</taxon>
        <taxon>Euteleostomi</taxon>
        <taxon>Mammalia</taxon>
        <taxon>Eutheria</taxon>
        <taxon>Euarchontoglires</taxon>
        <taxon>Glires</taxon>
        <taxon>Rodentia</taxon>
        <taxon>Myomorpha</taxon>
        <taxon>Muroidea</taxon>
        <taxon>Muridae</taxon>
        <taxon>Murinae</taxon>
        <taxon>Rattus</taxon>
    </lineage>
</organism>
<gene>
    <name type="primary">Lyrm2</name>
</gene>
<proteinExistence type="inferred from homology"/>
<protein>
    <recommendedName>
        <fullName>LYR motif-containing protein 2</fullName>
    </recommendedName>
</protein>
<comment type="function">
    <text evidence="1">Involved in efficient integration of the N-module into mitochondrial respiratory chain complex I.</text>
</comment>
<comment type="subcellular location">
    <subcellularLocation>
        <location evidence="1">Mitochondrion</location>
    </subcellularLocation>
</comment>
<comment type="similarity">
    <text evidence="3">Belongs to the complex I LYR family.</text>
</comment>
<reference key="1">
    <citation type="submission" date="2005-07" db="EMBL/GenBank/DDBJ databases">
        <authorList>
            <person name="Mural R.J."/>
            <person name="Adams M.D."/>
            <person name="Myers E.W."/>
            <person name="Smith H.O."/>
            <person name="Venter J.C."/>
        </authorList>
    </citation>
    <scope>NUCLEOTIDE SEQUENCE [LARGE SCALE GENOMIC DNA]</scope>
</reference>
<reference key="2">
    <citation type="journal article" date="2004" name="Genome Res.">
        <title>The status, quality, and expansion of the NIH full-length cDNA project: the Mammalian Gene Collection (MGC).</title>
        <authorList>
            <consortium name="The MGC Project Team"/>
        </authorList>
    </citation>
    <scope>NUCLEOTIDE SEQUENCE [LARGE SCALE MRNA]</scope>
    <source>
        <tissue>Thymus</tissue>
    </source>
</reference>
<sequence length="88" mass="10410">MAASRLPPATLTLKQFMRRQQVLLLYRKILRAIKQIPSDSDRKYLQDWAREEFKRNKSATEEDTIRMMITQGNMQLKELERTLALAKS</sequence>
<keyword id="KW-0496">Mitochondrion</keyword>
<keyword id="KW-1185">Reference proteome</keyword>
<keyword id="KW-0809">Transit peptide</keyword>
<feature type="transit peptide" description="Mitochondrion" evidence="2">
    <location>
        <begin position="1"/>
        <end position="19"/>
    </location>
</feature>
<feature type="chain" id="PRO_0000359762" description="LYR motif-containing protein 2">
    <location>
        <begin position="20"/>
        <end position="88"/>
    </location>
</feature>
<accession>B2GV91</accession>